<evidence type="ECO:0000255" key="1">
    <source>
        <dbReference type="HAMAP-Rule" id="MF_01838"/>
    </source>
</evidence>
<evidence type="ECO:0000269" key="2">
    <source>
    </source>
</evidence>
<evidence type="ECO:0000303" key="3">
    <source>
    </source>
</evidence>
<evidence type="ECO:0000305" key="4"/>
<sequence length="397" mass="43475">MIIKPKVRGFICTTTHPVGCEANVRRQIAYTQEQGMIANGPKRVLVIGASTGYGLASRIATAFGSGAATIGVFFEKAGSETKTATAGWYNSAAFDKAAKEAGLYAKSVNGDAFSNECRAKVIELIKADLGQIDLVVYSLASPVRKMPETGEVVRSALKPIGETYTTTAIDTNKDQIITATVEPANEEEIQNTITVMGGQDWELWMAALRDAGVLADGAKSVAYSYIGTDLTWPIYWHGTLGRAKEDLDRAATAIRGDLAAKGGTAHVAVLKSVVTQASSAIPVMPLYISMAFKIMKEKGIHEGCMEQVYRMMRTRLYGEELALDEQARIRMDDWELREDVQQTCRDLWPSITTENLSELTDYTGYKQEFLRLFGFGLAEVDYEADVNPDVKFDVVEL</sequence>
<gene>
    <name type="ordered locus">ASA_1682</name>
</gene>
<dbReference type="EC" id="1.3.1.9" evidence="1"/>
<dbReference type="EMBL" id="CP000644">
    <property type="protein sequence ID" value="ABO89763.1"/>
    <property type="molecule type" value="Genomic_DNA"/>
</dbReference>
<dbReference type="SMR" id="A4SLJ1"/>
<dbReference type="STRING" id="29491.GCA_000820065_02152"/>
<dbReference type="KEGG" id="asa:ASA_1682"/>
<dbReference type="eggNOG" id="COG3007">
    <property type="taxonomic scope" value="Bacteria"/>
</dbReference>
<dbReference type="HOGENOM" id="CLU_057698_1_0_6"/>
<dbReference type="UniPathway" id="UPA00094"/>
<dbReference type="Proteomes" id="UP000000225">
    <property type="component" value="Chromosome"/>
</dbReference>
<dbReference type="GO" id="GO:0004318">
    <property type="term" value="F:enoyl-[acyl-carrier-protein] reductase (NADH) activity"/>
    <property type="evidence" value="ECO:0007669"/>
    <property type="project" value="UniProtKB-UniRule"/>
</dbReference>
<dbReference type="GO" id="GO:0051287">
    <property type="term" value="F:NAD binding"/>
    <property type="evidence" value="ECO:0007669"/>
    <property type="project" value="UniProtKB-UniRule"/>
</dbReference>
<dbReference type="GO" id="GO:0050343">
    <property type="term" value="F:trans-2-enoyl-CoA reductase (NADH) activity"/>
    <property type="evidence" value="ECO:0007669"/>
    <property type="project" value="TreeGrafter"/>
</dbReference>
<dbReference type="GO" id="GO:0006633">
    <property type="term" value="P:fatty acid biosynthetic process"/>
    <property type="evidence" value="ECO:0007669"/>
    <property type="project" value="UniProtKB-UniRule"/>
</dbReference>
<dbReference type="FunFam" id="3.40.50.720:FF:000221">
    <property type="entry name" value="Enoyl-[acyl-carrier-protein] reductase [NADH]"/>
    <property type="match status" value="1"/>
</dbReference>
<dbReference type="Gene3D" id="3.40.50.720">
    <property type="entry name" value="NAD(P)-binding Rossmann-like Domain"/>
    <property type="match status" value="1"/>
</dbReference>
<dbReference type="HAMAP" id="MF_01838">
    <property type="entry name" value="FabV_reductase"/>
    <property type="match status" value="1"/>
</dbReference>
<dbReference type="InterPro" id="IPR024906">
    <property type="entry name" value="Eno_Rdtase_FAD-bd_dom"/>
</dbReference>
<dbReference type="InterPro" id="IPR024910">
    <property type="entry name" value="Enoyl-CoA_Rdtase_cat_dom"/>
</dbReference>
<dbReference type="InterPro" id="IPR050048">
    <property type="entry name" value="FabV-like_NADH_b"/>
</dbReference>
<dbReference type="InterPro" id="IPR010758">
    <property type="entry name" value="Trans-2-enoyl-CoA_reductase"/>
</dbReference>
<dbReference type="NCBIfam" id="NF043048">
    <property type="entry name" value="EnoyACPredFabV"/>
    <property type="match status" value="1"/>
</dbReference>
<dbReference type="NCBIfam" id="NF010177">
    <property type="entry name" value="PRK13656.1"/>
    <property type="match status" value="1"/>
</dbReference>
<dbReference type="PANTHER" id="PTHR37480">
    <property type="entry name" value="ENOYL-[ACYL-CARRIER-PROTEIN] REDUCTASE [NADH]"/>
    <property type="match status" value="1"/>
</dbReference>
<dbReference type="PANTHER" id="PTHR37480:SF1">
    <property type="entry name" value="ENOYL-[ACYL-CARRIER-PROTEIN] REDUCTASE [NADH]"/>
    <property type="match status" value="1"/>
</dbReference>
<dbReference type="Pfam" id="PF07055">
    <property type="entry name" value="Eno-Rase_FAD_bd"/>
    <property type="match status" value="1"/>
</dbReference>
<dbReference type="Pfam" id="PF12242">
    <property type="entry name" value="Eno-Rase_NADH_b"/>
    <property type="match status" value="1"/>
</dbReference>
<dbReference type="Pfam" id="PF12241">
    <property type="entry name" value="Enoyl_reductase"/>
    <property type="match status" value="1"/>
</dbReference>
<reference key="1">
    <citation type="journal article" date="2008" name="BMC Genomics">
        <title>The genome of Aeromonas salmonicida subsp. salmonicida A449: insights into the evolution of a fish pathogen.</title>
        <authorList>
            <person name="Reith M.E."/>
            <person name="Singh R.K."/>
            <person name="Curtis B."/>
            <person name="Boyd J.M."/>
            <person name="Bouevitch A."/>
            <person name="Kimball J."/>
            <person name="Munholland J."/>
            <person name="Murphy C."/>
            <person name="Sarty D."/>
            <person name="Williams J."/>
            <person name="Nash J.H."/>
            <person name="Johnson S.C."/>
            <person name="Brown L.L."/>
        </authorList>
    </citation>
    <scope>NUCLEOTIDE SEQUENCE [LARGE SCALE GENOMIC DNA]</scope>
    <source>
        <strain>A449</strain>
    </source>
</reference>
<reference key="2">
    <citation type="journal article" date="2015" name="J. Microbiol. Biotechnol.">
        <title>Triclosan resistance in a bacterial fish pathogen, aeromonas salmonicida subsp. salmonicida, is mediated by an enoyl reductase, FabV.</title>
        <authorList>
            <person name="Khan R."/>
            <person name="Lee M.H."/>
            <person name="Joo H.J."/>
            <person name="Jung Y.H."/>
            <person name="Ahmad S."/>
            <person name="Choi J.H."/>
            <person name="Lee S.W."/>
        </authorList>
    </citation>
    <scope>FUNCTION</scope>
    <scope>ACTIVITY REGULATION</scope>
</reference>
<protein>
    <recommendedName>
        <fullName evidence="3">Enoyl-[acyl-carrier-protein] reductase [NADH] FabV</fullName>
        <shortName evidence="3">ENR</shortName>
        <ecNumber evidence="1">1.3.1.9</ecNumber>
    </recommendedName>
</protein>
<accession>A4SLJ1</accession>
<organism>
    <name type="scientific">Aeromonas salmonicida (strain A449)</name>
    <dbReference type="NCBI Taxonomy" id="382245"/>
    <lineage>
        <taxon>Bacteria</taxon>
        <taxon>Pseudomonadati</taxon>
        <taxon>Pseudomonadota</taxon>
        <taxon>Gammaproteobacteria</taxon>
        <taxon>Aeromonadales</taxon>
        <taxon>Aeromonadaceae</taxon>
        <taxon>Aeromonas</taxon>
    </lineage>
</organism>
<name>FABV_AERS4</name>
<comment type="function">
    <text evidence="2">Involved in the final reduction of the elongation cycle of fatty acid synthesis (FAS II). Catalyzes the NADH-dependent reduction of the carbon-carbon double bond in the enoyl moiety that is covalently linked to an acyl carrier protein (ACP).</text>
</comment>
<comment type="catalytic activity">
    <reaction evidence="1">
        <text>a 2,3-saturated acyl-[ACP] + NAD(+) = a (2E)-enoyl-[ACP] + NADH + H(+)</text>
        <dbReference type="Rhea" id="RHEA:10240"/>
        <dbReference type="Rhea" id="RHEA-COMP:9925"/>
        <dbReference type="Rhea" id="RHEA-COMP:9926"/>
        <dbReference type="ChEBI" id="CHEBI:15378"/>
        <dbReference type="ChEBI" id="CHEBI:57540"/>
        <dbReference type="ChEBI" id="CHEBI:57945"/>
        <dbReference type="ChEBI" id="CHEBI:78784"/>
        <dbReference type="ChEBI" id="CHEBI:78785"/>
        <dbReference type="EC" id="1.3.1.9"/>
    </reaction>
</comment>
<comment type="activity regulation">
    <text evidence="2">Resistant to triclosan.</text>
</comment>
<comment type="pathway">
    <text evidence="4">Lipid metabolism; fatty acid biosynthesis.</text>
</comment>
<comment type="subunit">
    <text evidence="1">Monomer.</text>
</comment>
<comment type="similarity">
    <text evidence="1">Belongs to the TER reductase family.</text>
</comment>
<proteinExistence type="inferred from homology"/>
<feature type="chain" id="PRO_0000433641" description="Enoyl-[acyl-carrier-protein] reductase [NADH] FabV">
    <location>
        <begin position="1"/>
        <end position="397"/>
    </location>
</feature>
<feature type="active site" description="Proton donor" evidence="1">
    <location>
        <position position="235"/>
    </location>
</feature>
<feature type="binding site" evidence="1">
    <location>
        <begin position="48"/>
        <end position="53"/>
    </location>
    <ligand>
        <name>NAD(+)</name>
        <dbReference type="ChEBI" id="CHEBI:57540"/>
    </ligand>
</feature>
<feature type="binding site" evidence="1">
    <location>
        <begin position="74"/>
        <end position="75"/>
    </location>
    <ligand>
        <name>NAD(+)</name>
        <dbReference type="ChEBI" id="CHEBI:57540"/>
    </ligand>
</feature>
<feature type="binding site" evidence="1">
    <location>
        <begin position="111"/>
        <end position="112"/>
    </location>
    <ligand>
        <name>NAD(+)</name>
        <dbReference type="ChEBI" id="CHEBI:57540"/>
    </ligand>
</feature>
<feature type="binding site" evidence="1">
    <location>
        <begin position="139"/>
        <end position="140"/>
    </location>
    <ligand>
        <name>NAD(+)</name>
        <dbReference type="ChEBI" id="CHEBI:57540"/>
    </ligand>
</feature>
<feature type="binding site" evidence="1">
    <location>
        <position position="225"/>
    </location>
    <ligand>
        <name>substrate</name>
    </ligand>
</feature>
<feature type="binding site" evidence="1">
    <location>
        <position position="244"/>
    </location>
    <ligand>
        <name>NAD(+)</name>
        <dbReference type="ChEBI" id="CHEBI:57540"/>
    </ligand>
</feature>
<feature type="binding site" evidence="1">
    <location>
        <begin position="273"/>
        <end position="275"/>
    </location>
    <ligand>
        <name>NAD(+)</name>
        <dbReference type="ChEBI" id="CHEBI:57540"/>
    </ligand>
</feature>
<feature type="site" description="Plays an important role in discriminating NADH against NADPH" evidence="1">
    <location>
        <position position="75"/>
    </location>
</feature>
<keyword id="KW-0275">Fatty acid biosynthesis</keyword>
<keyword id="KW-0276">Fatty acid metabolism</keyword>
<keyword id="KW-0444">Lipid biosynthesis</keyword>
<keyword id="KW-0443">Lipid metabolism</keyword>
<keyword id="KW-0520">NAD</keyword>
<keyword id="KW-0560">Oxidoreductase</keyword>